<comment type="subcellular location">
    <subcellularLocation>
        <location evidence="1">Secreted</location>
    </subcellularLocation>
</comment>
<comment type="tissue specificity">
    <text evidence="3">Flower buds.</text>
</comment>
<comment type="similarity">
    <text evidence="4">Belongs to the DEFL family.</text>
</comment>
<proteinExistence type="evidence at transcript level"/>
<evidence type="ECO:0000250" key="1"/>
<evidence type="ECO:0000255" key="2"/>
<evidence type="ECO:0000269" key="3">
    <source>
    </source>
</evidence>
<evidence type="ECO:0000305" key="4"/>
<protein>
    <recommendedName>
        <fullName>Defensin-like protein 229</fullName>
    </recommendedName>
    <alternativeName>
        <fullName>S locus cysteine-rich-like protein 27</fullName>
        <shortName>Protein SCRL27</shortName>
        <shortName>SCR-like protein 27</shortName>
    </alternativeName>
</protein>
<feature type="signal peptide" evidence="2">
    <location>
        <begin position="1"/>
        <end position="19"/>
    </location>
</feature>
<feature type="chain" id="PRO_0000031953" description="Defensin-like protein 229">
    <location>
        <begin position="20"/>
        <end position="93"/>
    </location>
</feature>
<feature type="disulfide bond" evidence="1">
    <location>
        <begin position="38"/>
        <end position="93"/>
    </location>
</feature>
<feature type="disulfide bond" evidence="1">
    <location>
        <begin position="48"/>
        <end position="72"/>
    </location>
</feature>
<feature type="disulfide bond" evidence="1">
    <location>
        <begin position="56"/>
        <end position="84"/>
    </location>
</feature>
<feature type="disulfide bond" evidence="1">
    <location>
        <begin position="70"/>
        <end position="86"/>
    </location>
</feature>
<organism evidence="4">
    <name type="scientific">Arabidopsis thaliana</name>
    <name type="common">Mouse-ear cress</name>
    <dbReference type="NCBI Taxonomy" id="3702"/>
    <lineage>
        <taxon>Eukaryota</taxon>
        <taxon>Viridiplantae</taxon>
        <taxon>Streptophyta</taxon>
        <taxon>Embryophyta</taxon>
        <taxon>Tracheophyta</taxon>
        <taxon>Spermatophyta</taxon>
        <taxon>Magnoliopsida</taxon>
        <taxon>eudicotyledons</taxon>
        <taxon>Gunneridae</taxon>
        <taxon>Pentapetalae</taxon>
        <taxon>rosids</taxon>
        <taxon>malvids</taxon>
        <taxon>Brassicales</taxon>
        <taxon>Brassicaceae</taxon>
        <taxon>Camelineae</taxon>
        <taxon>Arabidopsis</taxon>
    </lineage>
</organism>
<keyword id="KW-0929">Antimicrobial</keyword>
<keyword id="KW-1015">Disulfide bond</keyword>
<keyword id="KW-0295">Fungicide</keyword>
<keyword id="KW-0611">Plant defense</keyword>
<keyword id="KW-1185">Reference proteome</keyword>
<keyword id="KW-0964">Secreted</keyword>
<keyword id="KW-0732">Signal</keyword>
<name>DF229_ARATH</name>
<dbReference type="EMBL" id="AB016870">
    <property type="status" value="NOT_ANNOTATED_CDS"/>
    <property type="molecule type" value="Genomic_DNA"/>
</dbReference>
<dbReference type="EMBL" id="CP002688">
    <property type="protein sequence ID" value="AED95310.1"/>
    <property type="molecule type" value="Genomic_DNA"/>
</dbReference>
<dbReference type="RefSeq" id="NP_001032016.1">
    <property type="nucleotide sequence ID" value="NM_001036939.2"/>
</dbReference>
<dbReference type="SMR" id="P82646"/>
<dbReference type="PaxDb" id="3702-AT5G45875.1"/>
<dbReference type="ProteomicsDB" id="224571"/>
<dbReference type="EnsemblPlants" id="AT5G45875.1">
    <property type="protein sequence ID" value="AT5G45875.1"/>
    <property type="gene ID" value="AT5G45875"/>
</dbReference>
<dbReference type="GeneID" id="3771443"/>
<dbReference type="Gramene" id="AT5G45875.1">
    <property type="protein sequence ID" value="AT5G45875.1"/>
    <property type="gene ID" value="AT5G45875"/>
</dbReference>
<dbReference type="KEGG" id="ath:AT5G45875"/>
<dbReference type="Araport" id="AT5G45875"/>
<dbReference type="TAIR" id="AT5G45875">
    <property type="gene designation" value="SCRL27"/>
</dbReference>
<dbReference type="HOGENOM" id="CLU_174283_0_0_1"/>
<dbReference type="InParanoid" id="P82646"/>
<dbReference type="OMA" id="TCIRGFN"/>
<dbReference type="PhylomeDB" id="P82646"/>
<dbReference type="PRO" id="PR:P82646"/>
<dbReference type="Proteomes" id="UP000006548">
    <property type="component" value="Chromosome 5"/>
</dbReference>
<dbReference type="ExpressionAtlas" id="P82646">
    <property type="expression patterns" value="baseline"/>
</dbReference>
<dbReference type="GO" id="GO:0005576">
    <property type="term" value="C:extracellular region"/>
    <property type="evidence" value="ECO:0007669"/>
    <property type="project" value="UniProtKB-SubCell"/>
</dbReference>
<dbReference type="GO" id="GO:0050832">
    <property type="term" value="P:defense response to fungus"/>
    <property type="evidence" value="ECO:0007669"/>
    <property type="project" value="UniProtKB-KW"/>
</dbReference>
<dbReference type="GO" id="GO:0031640">
    <property type="term" value="P:killing of cells of another organism"/>
    <property type="evidence" value="ECO:0007669"/>
    <property type="project" value="UniProtKB-KW"/>
</dbReference>
<dbReference type="GO" id="GO:0007165">
    <property type="term" value="P:signal transduction"/>
    <property type="evidence" value="ECO:0007669"/>
    <property type="project" value="InterPro"/>
</dbReference>
<dbReference type="InterPro" id="IPR010682">
    <property type="entry name" value="SCRL"/>
</dbReference>
<dbReference type="PANTHER" id="PTHR34450:SF5">
    <property type="entry name" value="DEFENSIN-LIKE PROTEIN 229-RELATED"/>
    <property type="match status" value="1"/>
</dbReference>
<dbReference type="PANTHER" id="PTHR34450">
    <property type="entry name" value="DEFENSIN-LIKE PROTEIN 245-RELATED"/>
    <property type="match status" value="1"/>
</dbReference>
<dbReference type="Pfam" id="PF06876">
    <property type="entry name" value="SCRL"/>
    <property type="match status" value="1"/>
</dbReference>
<gene>
    <name type="primary">SCRL27</name>
    <name type="ordered locus">At5g45875</name>
    <name type="ORF">K15I22</name>
</gene>
<accession>P82646</accession>
<reference evidence="4" key="1">
    <citation type="journal article" date="1998" name="DNA Res.">
        <title>Structural analysis of Arabidopsis thaliana chromosome 5. VIII. Sequence features of the regions of 1,081,958 bp covered by seventeen physically assigned P1 and TAC clones.</title>
        <authorList>
            <person name="Asamizu E."/>
            <person name="Sato S."/>
            <person name="Kaneko T."/>
            <person name="Nakamura Y."/>
            <person name="Kotani H."/>
            <person name="Miyajima N."/>
            <person name="Tabata S."/>
        </authorList>
    </citation>
    <scope>NUCLEOTIDE SEQUENCE [LARGE SCALE GENOMIC DNA]</scope>
    <source>
        <strain>cv. Columbia</strain>
    </source>
</reference>
<reference key="2">
    <citation type="journal article" date="2017" name="Plant J.">
        <title>Araport11: a complete reannotation of the Arabidopsis thaliana reference genome.</title>
        <authorList>
            <person name="Cheng C.Y."/>
            <person name="Krishnakumar V."/>
            <person name="Chan A.P."/>
            <person name="Thibaud-Nissen F."/>
            <person name="Schobel S."/>
            <person name="Town C.D."/>
        </authorList>
    </citation>
    <scope>GENOME REANNOTATION</scope>
    <source>
        <strain>cv. Columbia</strain>
    </source>
</reference>
<reference evidence="4" key="3">
    <citation type="journal article" date="2001" name="Plant Mol. Biol.">
        <title>Two large Arabidopsis thaliana gene families are homologous to the Brassica gene superfamily that encodes pollen coat proteins and the male component of the self-incompatibility response.</title>
        <authorList>
            <person name="Vanoosthuyse V."/>
            <person name="Miege C."/>
            <person name="Dumas C."/>
            <person name="Cock J.M."/>
        </authorList>
    </citation>
    <scope>IDENTIFICATION</scope>
    <scope>TISSUE SPECIFICITY</scope>
</reference>
<reference key="4">
    <citation type="journal article" date="2005" name="Plant Physiol.">
        <title>Genome organization of more than 300 defensin-like genes in Arabidopsis.</title>
        <authorList>
            <person name="Silverstein K.A.T."/>
            <person name="Graham M.A."/>
            <person name="Paape T.D."/>
            <person name="VandenBosch K.A."/>
        </authorList>
    </citation>
    <scope>GENE FAMILY</scope>
</reference>
<sequence length="93" mass="10736">MKSTTLFMVSCVLIFCVLSHVREVKSVETKAKRVKKVCEKAQVFEQNCGWDGNKTCIRGFNKIKEYPFHCECGIYDAPNSRRICKCKFPYSPC</sequence>